<sequence>MTETKEEKVHKVFEKISPSYDRMNSVISFKLHVKWRKETMKLMRVQKGTNVLDVCCGTADWSIMMAEEIGPEGHVTGLDFSENMLKVGREKVKEADLHNVELIHGNAMELPFPDNSFDYVTIGFGLRNVPDYMQVLREMYRVLKPGGQLACIDTSQPNIPGWKQVFNAYFRYVMPVFGKFFAKSYKEYSWLQESTREFPGMARLAEMFQEAGFSYVRYISHSGGASATHFGFKKKEQ</sequence>
<dbReference type="EC" id="2.1.1.163" evidence="1"/>
<dbReference type="EMBL" id="AL591981">
    <property type="protein sequence ID" value="CAD00009.1"/>
    <property type="molecule type" value="Genomic_DNA"/>
</dbReference>
<dbReference type="PIR" id="AC1316">
    <property type="entry name" value="AC1316"/>
</dbReference>
<dbReference type="RefSeq" id="WP_003726790.1">
    <property type="nucleotide sequence ID" value="NZ_CP149495.1"/>
</dbReference>
<dbReference type="SMR" id="P67055"/>
<dbReference type="STRING" id="169963.gene:17594616"/>
<dbReference type="PaxDb" id="169963-lmo1931"/>
<dbReference type="EnsemblBacteria" id="CAD00009">
    <property type="protein sequence ID" value="CAD00009"/>
    <property type="gene ID" value="CAD00009"/>
</dbReference>
<dbReference type="GeneID" id="93239845"/>
<dbReference type="KEGG" id="lmo:lmo1931"/>
<dbReference type="PATRIC" id="fig|169963.11.peg.1977"/>
<dbReference type="eggNOG" id="COG2226">
    <property type="taxonomic scope" value="Bacteria"/>
</dbReference>
<dbReference type="HOGENOM" id="CLU_037990_0_0_9"/>
<dbReference type="OrthoDB" id="9808140at2"/>
<dbReference type="PhylomeDB" id="P67055"/>
<dbReference type="BioCyc" id="LMON169963:LMO1931-MONOMER"/>
<dbReference type="UniPathway" id="UPA00079">
    <property type="reaction ID" value="UER00169"/>
</dbReference>
<dbReference type="Proteomes" id="UP000000817">
    <property type="component" value="Chromosome"/>
</dbReference>
<dbReference type="GO" id="GO:0043770">
    <property type="term" value="F:demethylmenaquinone methyltransferase activity"/>
    <property type="evidence" value="ECO:0007669"/>
    <property type="project" value="UniProtKB-UniRule"/>
</dbReference>
<dbReference type="GO" id="GO:0008168">
    <property type="term" value="F:methyltransferase activity"/>
    <property type="evidence" value="ECO:0000318"/>
    <property type="project" value="GO_Central"/>
</dbReference>
<dbReference type="GO" id="GO:0009234">
    <property type="term" value="P:menaquinone biosynthetic process"/>
    <property type="evidence" value="ECO:0007669"/>
    <property type="project" value="UniProtKB-UniRule"/>
</dbReference>
<dbReference type="GO" id="GO:0032259">
    <property type="term" value="P:methylation"/>
    <property type="evidence" value="ECO:0007669"/>
    <property type="project" value="UniProtKB-KW"/>
</dbReference>
<dbReference type="CDD" id="cd02440">
    <property type="entry name" value="AdoMet_MTases"/>
    <property type="match status" value="1"/>
</dbReference>
<dbReference type="FunFam" id="3.40.50.150:FF:000086">
    <property type="entry name" value="Demethylmenaquinone methyltransferase"/>
    <property type="match status" value="1"/>
</dbReference>
<dbReference type="Gene3D" id="3.40.50.150">
    <property type="entry name" value="Vaccinia Virus protein VP39"/>
    <property type="match status" value="1"/>
</dbReference>
<dbReference type="HAMAP" id="MF_01813">
    <property type="entry name" value="MenG_UbiE_methyltr"/>
    <property type="match status" value="1"/>
</dbReference>
<dbReference type="InterPro" id="IPR014122">
    <property type="entry name" value="MenG_heptapren"/>
</dbReference>
<dbReference type="InterPro" id="IPR029063">
    <property type="entry name" value="SAM-dependent_MTases_sf"/>
</dbReference>
<dbReference type="InterPro" id="IPR004033">
    <property type="entry name" value="UbiE/COQ5_MeTrFase"/>
</dbReference>
<dbReference type="InterPro" id="IPR023576">
    <property type="entry name" value="UbiE/COQ5_MeTrFase_CS"/>
</dbReference>
<dbReference type="NCBIfam" id="TIGR02752">
    <property type="entry name" value="MenG_heptapren"/>
    <property type="match status" value="1"/>
</dbReference>
<dbReference type="NCBIfam" id="TIGR01934">
    <property type="entry name" value="MenG_MenH_UbiE"/>
    <property type="match status" value="1"/>
</dbReference>
<dbReference type="NCBIfam" id="NF001243">
    <property type="entry name" value="PRK00216.1-4"/>
    <property type="match status" value="1"/>
</dbReference>
<dbReference type="NCBIfam" id="NF001244">
    <property type="entry name" value="PRK00216.1-5"/>
    <property type="match status" value="1"/>
</dbReference>
<dbReference type="PANTHER" id="PTHR43591:SF24">
    <property type="entry name" value="2-METHOXY-6-POLYPRENYL-1,4-BENZOQUINOL METHYLASE, MITOCHONDRIAL"/>
    <property type="match status" value="1"/>
</dbReference>
<dbReference type="PANTHER" id="PTHR43591">
    <property type="entry name" value="METHYLTRANSFERASE"/>
    <property type="match status" value="1"/>
</dbReference>
<dbReference type="Pfam" id="PF01209">
    <property type="entry name" value="Ubie_methyltran"/>
    <property type="match status" value="1"/>
</dbReference>
<dbReference type="SUPFAM" id="SSF53335">
    <property type="entry name" value="S-adenosyl-L-methionine-dependent methyltransferases"/>
    <property type="match status" value="1"/>
</dbReference>
<dbReference type="PROSITE" id="PS51608">
    <property type="entry name" value="SAM_MT_UBIE"/>
    <property type="match status" value="1"/>
</dbReference>
<dbReference type="PROSITE" id="PS01183">
    <property type="entry name" value="UBIE_1"/>
    <property type="match status" value="1"/>
</dbReference>
<dbReference type="PROSITE" id="PS01184">
    <property type="entry name" value="UBIE_2"/>
    <property type="match status" value="1"/>
</dbReference>
<accession>P67055</accession>
<accession>Q92A77</accession>
<feature type="chain" id="PRO_0000193293" description="Demethylmenaquinone methyltransferase">
    <location>
        <begin position="1"/>
        <end position="237"/>
    </location>
</feature>
<feature type="binding site" evidence="1">
    <location>
        <position position="58"/>
    </location>
    <ligand>
        <name>S-adenosyl-L-methionine</name>
        <dbReference type="ChEBI" id="CHEBI:59789"/>
    </ligand>
</feature>
<feature type="binding site" evidence="1">
    <location>
        <position position="79"/>
    </location>
    <ligand>
        <name>S-adenosyl-L-methionine</name>
        <dbReference type="ChEBI" id="CHEBI:59789"/>
    </ligand>
</feature>
<feature type="binding site" evidence="1">
    <location>
        <begin position="106"/>
        <end position="107"/>
    </location>
    <ligand>
        <name>S-adenosyl-L-methionine</name>
        <dbReference type="ChEBI" id="CHEBI:59789"/>
    </ligand>
</feature>
<name>MENG_LISMO</name>
<gene>
    <name evidence="1" type="primary">menG</name>
    <name type="ordered locus">lmo1931</name>
</gene>
<protein>
    <recommendedName>
        <fullName evidence="1">Demethylmenaquinone methyltransferase</fullName>
        <ecNumber evidence="1">2.1.1.163</ecNumber>
    </recommendedName>
</protein>
<reference key="1">
    <citation type="journal article" date="2001" name="Science">
        <title>Comparative genomics of Listeria species.</title>
        <authorList>
            <person name="Glaser P."/>
            <person name="Frangeul L."/>
            <person name="Buchrieser C."/>
            <person name="Rusniok C."/>
            <person name="Amend A."/>
            <person name="Baquero F."/>
            <person name="Berche P."/>
            <person name="Bloecker H."/>
            <person name="Brandt P."/>
            <person name="Chakraborty T."/>
            <person name="Charbit A."/>
            <person name="Chetouani F."/>
            <person name="Couve E."/>
            <person name="de Daruvar A."/>
            <person name="Dehoux P."/>
            <person name="Domann E."/>
            <person name="Dominguez-Bernal G."/>
            <person name="Duchaud E."/>
            <person name="Durant L."/>
            <person name="Dussurget O."/>
            <person name="Entian K.-D."/>
            <person name="Fsihi H."/>
            <person name="Garcia-del Portillo F."/>
            <person name="Garrido P."/>
            <person name="Gautier L."/>
            <person name="Goebel W."/>
            <person name="Gomez-Lopez N."/>
            <person name="Hain T."/>
            <person name="Hauf J."/>
            <person name="Jackson D."/>
            <person name="Jones L.-M."/>
            <person name="Kaerst U."/>
            <person name="Kreft J."/>
            <person name="Kuhn M."/>
            <person name="Kunst F."/>
            <person name="Kurapkat G."/>
            <person name="Madueno E."/>
            <person name="Maitournam A."/>
            <person name="Mata Vicente J."/>
            <person name="Ng E."/>
            <person name="Nedjari H."/>
            <person name="Nordsiek G."/>
            <person name="Novella S."/>
            <person name="de Pablos B."/>
            <person name="Perez-Diaz J.-C."/>
            <person name="Purcell R."/>
            <person name="Remmel B."/>
            <person name="Rose M."/>
            <person name="Schlueter T."/>
            <person name="Simoes N."/>
            <person name="Tierrez A."/>
            <person name="Vazquez-Boland J.-A."/>
            <person name="Voss H."/>
            <person name="Wehland J."/>
            <person name="Cossart P."/>
        </authorList>
    </citation>
    <scope>NUCLEOTIDE SEQUENCE [LARGE SCALE GENOMIC DNA]</scope>
    <source>
        <strain>ATCC BAA-679 / EGD-e</strain>
    </source>
</reference>
<organism>
    <name type="scientific">Listeria monocytogenes serovar 1/2a (strain ATCC BAA-679 / EGD-e)</name>
    <dbReference type="NCBI Taxonomy" id="169963"/>
    <lineage>
        <taxon>Bacteria</taxon>
        <taxon>Bacillati</taxon>
        <taxon>Bacillota</taxon>
        <taxon>Bacilli</taxon>
        <taxon>Bacillales</taxon>
        <taxon>Listeriaceae</taxon>
        <taxon>Listeria</taxon>
    </lineage>
</organism>
<comment type="function">
    <text evidence="1">Methyltransferase required for the conversion of demethylmenaquinol (DMKH2) to menaquinol (MKH2).</text>
</comment>
<comment type="catalytic activity">
    <reaction evidence="1">
        <text>a 2-demethylmenaquinol + S-adenosyl-L-methionine = a menaquinol + S-adenosyl-L-homocysteine + H(+)</text>
        <dbReference type="Rhea" id="RHEA:42640"/>
        <dbReference type="Rhea" id="RHEA-COMP:9539"/>
        <dbReference type="Rhea" id="RHEA-COMP:9563"/>
        <dbReference type="ChEBI" id="CHEBI:15378"/>
        <dbReference type="ChEBI" id="CHEBI:18151"/>
        <dbReference type="ChEBI" id="CHEBI:55437"/>
        <dbReference type="ChEBI" id="CHEBI:57856"/>
        <dbReference type="ChEBI" id="CHEBI:59789"/>
        <dbReference type="EC" id="2.1.1.163"/>
    </reaction>
</comment>
<comment type="pathway">
    <text evidence="1">Quinol/quinone metabolism; menaquinone biosynthesis; menaquinol from 1,4-dihydroxy-2-naphthoate: step 2/2.</text>
</comment>
<comment type="similarity">
    <text evidence="1">Belongs to the class I-like SAM-binding methyltransferase superfamily. MenG/UbiE family.</text>
</comment>
<proteinExistence type="inferred from homology"/>
<evidence type="ECO:0000255" key="1">
    <source>
        <dbReference type="HAMAP-Rule" id="MF_01813"/>
    </source>
</evidence>
<keyword id="KW-0474">Menaquinone biosynthesis</keyword>
<keyword id="KW-0489">Methyltransferase</keyword>
<keyword id="KW-1185">Reference proteome</keyword>
<keyword id="KW-0949">S-adenosyl-L-methionine</keyword>
<keyword id="KW-0808">Transferase</keyword>